<sequence>MLKEFKTFIARGNVIDMAVGIIVGAAFTSIVKSLVNNLINPLIGLFIGRIDLSNLVLTVGDAQFKYGSFLNAVINFLIISFVVFLMVKAINTFRKKEDKKTEAPSEEVMYLKEITELLKKNKE</sequence>
<proteinExistence type="inferred from homology"/>
<evidence type="ECO:0000255" key="1">
    <source>
        <dbReference type="HAMAP-Rule" id="MF_00115"/>
    </source>
</evidence>
<organism>
    <name type="scientific">Limosilactobacillus reuteri (strain DSM 20016)</name>
    <name type="common">Lactobacillus reuteri</name>
    <dbReference type="NCBI Taxonomy" id="557436"/>
    <lineage>
        <taxon>Bacteria</taxon>
        <taxon>Bacillati</taxon>
        <taxon>Bacillota</taxon>
        <taxon>Bacilli</taxon>
        <taxon>Lactobacillales</taxon>
        <taxon>Lactobacillaceae</taxon>
        <taxon>Limosilactobacillus</taxon>
    </lineage>
</organism>
<name>MSCL_LIMRD</name>
<dbReference type="EMBL" id="CP000705">
    <property type="protein sequence ID" value="ABQ82587.1"/>
    <property type="molecule type" value="Genomic_DNA"/>
</dbReference>
<dbReference type="RefSeq" id="WP_003667360.1">
    <property type="nucleotide sequence ID" value="NC_009513.1"/>
</dbReference>
<dbReference type="SMR" id="A5VIB3"/>
<dbReference type="STRING" id="557436.Lreu_0317"/>
<dbReference type="KEGG" id="lre:Lreu_0317"/>
<dbReference type="PATRIC" id="fig|557436.17.peg.1894"/>
<dbReference type="eggNOG" id="COG1970">
    <property type="taxonomic scope" value="Bacteria"/>
</dbReference>
<dbReference type="HOGENOM" id="CLU_095787_0_0_9"/>
<dbReference type="Proteomes" id="UP000001991">
    <property type="component" value="Chromosome"/>
</dbReference>
<dbReference type="GO" id="GO:0005886">
    <property type="term" value="C:plasma membrane"/>
    <property type="evidence" value="ECO:0007669"/>
    <property type="project" value="UniProtKB-SubCell"/>
</dbReference>
<dbReference type="GO" id="GO:0008381">
    <property type="term" value="F:mechanosensitive monoatomic ion channel activity"/>
    <property type="evidence" value="ECO:0007669"/>
    <property type="project" value="UniProtKB-UniRule"/>
</dbReference>
<dbReference type="Gene3D" id="1.10.1200.120">
    <property type="entry name" value="Large-conductance mechanosensitive channel, MscL, domain 1"/>
    <property type="match status" value="1"/>
</dbReference>
<dbReference type="HAMAP" id="MF_00115">
    <property type="entry name" value="MscL"/>
    <property type="match status" value="1"/>
</dbReference>
<dbReference type="InterPro" id="IPR019823">
    <property type="entry name" value="Mechanosensitive_channel_CS"/>
</dbReference>
<dbReference type="InterPro" id="IPR001185">
    <property type="entry name" value="MS_channel"/>
</dbReference>
<dbReference type="InterPro" id="IPR037673">
    <property type="entry name" value="MSC/AndL"/>
</dbReference>
<dbReference type="InterPro" id="IPR036019">
    <property type="entry name" value="MscL_channel"/>
</dbReference>
<dbReference type="NCBIfam" id="TIGR00220">
    <property type="entry name" value="mscL"/>
    <property type="match status" value="1"/>
</dbReference>
<dbReference type="NCBIfam" id="NF001842">
    <property type="entry name" value="PRK00567.1-3"/>
    <property type="match status" value="1"/>
</dbReference>
<dbReference type="PANTHER" id="PTHR30266:SF2">
    <property type="entry name" value="LARGE-CONDUCTANCE MECHANOSENSITIVE CHANNEL"/>
    <property type="match status" value="1"/>
</dbReference>
<dbReference type="PANTHER" id="PTHR30266">
    <property type="entry name" value="MECHANOSENSITIVE CHANNEL MSCL"/>
    <property type="match status" value="1"/>
</dbReference>
<dbReference type="Pfam" id="PF01741">
    <property type="entry name" value="MscL"/>
    <property type="match status" value="1"/>
</dbReference>
<dbReference type="PRINTS" id="PR01264">
    <property type="entry name" value="MECHCHANNEL"/>
</dbReference>
<dbReference type="SUPFAM" id="SSF81330">
    <property type="entry name" value="Gated mechanosensitive channel"/>
    <property type="match status" value="1"/>
</dbReference>
<dbReference type="PROSITE" id="PS01327">
    <property type="entry name" value="MSCL"/>
    <property type="match status" value="1"/>
</dbReference>
<comment type="function">
    <text evidence="1">Channel that opens in response to stretch forces in the membrane lipid bilayer. May participate in the regulation of osmotic pressure changes within the cell.</text>
</comment>
<comment type="subunit">
    <text evidence="1">Homopentamer.</text>
</comment>
<comment type="subcellular location">
    <subcellularLocation>
        <location evidence="1">Cell membrane</location>
        <topology evidence="1">Multi-pass membrane protein</topology>
    </subcellularLocation>
</comment>
<comment type="similarity">
    <text evidence="1">Belongs to the MscL family.</text>
</comment>
<reference key="1">
    <citation type="journal article" date="2011" name="PLoS Genet.">
        <title>The evolution of host specialization in the vertebrate gut symbiont Lactobacillus reuteri.</title>
        <authorList>
            <person name="Frese S.A."/>
            <person name="Benson A.K."/>
            <person name="Tannock G.W."/>
            <person name="Loach D.M."/>
            <person name="Kim J."/>
            <person name="Zhang M."/>
            <person name="Oh P.L."/>
            <person name="Heng N.C."/>
            <person name="Patil P.B."/>
            <person name="Juge N."/>
            <person name="Mackenzie D.A."/>
            <person name="Pearson B.M."/>
            <person name="Lapidus A."/>
            <person name="Dalin E."/>
            <person name="Tice H."/>
            <person name="Goltsman E."/>
            <person name="Land M."/>
            <person name="Hauser L."/>
            <person name="Ivanova N."/>
            <person name="Kyrpides N.C."/>
            <person name="Walter J."/>
        </authorList>
    </citation>
    <scope>NUCLEOTIDE SEQUENCE [LARGE SCALE GENOMIC DNA]</scope>
    <source>
        <strain>DSM 20016</strain>
    </source>
</reference>
<keyword id="KW-1003">Cell membrane</keyword>
<keyword id="KW-0407">Ion channel</keyword>
<keyword id="KW-0406">Ion transport</keyword>
<keyword id="KW-0472">Membrane</keyword>
<keyword id="KW-1185">Reference proteome</keyword>
<keyword id="KW-0812">Transmembrane</keyword>
<keyword id="KW-1133">Transmembrane helix</keyword>
<keyword id="KW-0813">Transport</keyword>
<accession>A5VIB3</accession>
<feature type="chain" id="PRO_1000057757" description="Large-conductance mechanosensitive channel">
    <location>
        <begin position="1"/>
        <end position="123"/>
    </location>
</feature>
<feature type="transmembrane region" description="Helical" evidence="1">
    <location>
        <begin position="14"/>
        <end position="34"/>
    </location>
</feature>
<feature type="transmembrane region" description="Helical" evidence="1">
    <location>
        <begin position="67"/>
        <end position="87"/>
    </location>
</feature>
<gene>
    <name evidence="1" type="primary">mscL</name>
    <name type="ordered locus">Lreu_0317</name>
</gene>
<protein>
    <recommendedName>
        <fullName evidence="1">Large-conductance mechanosensitive channel</fullName>
    </recommendedName>
</protein>